<accession>Q58212</accession>
<proteinExistence type="predicted"/>
<feature type="chain" id="PRO_0000107052" description="Uncharacterized protein MJ0802">
    <location>
        <begin position="1"/>
        <end position="188"/>
    </location>
</feature>
<dbReference type="EMBL" id="L77117">
    <property type="protein sequence ID" value="AAB98803.1"/>
    <property type="molecule type" value="Genomic_DNA"/>
</dbReference>
<dbReference type="PIR" id="B64400">
    <property type="entry name" value="B64400"/>
</dbReference>
<dbReference type="RefSeq" id="WP_010870312.1">
    <property type="nucleotide sequence ID" value="NC_000909.1"/>
</dbReference>
<dbReference type="STRING" id="243232.MJ_0802"/>
<dbReference type="PaxDb" id="243232-MJ_0802"/>
<dbReference type="EnsemblBacteria" id="AAB98803">
    <property type="protein sequence ID" value="AAB98803"/>
    <property type="gene ID" value="MJ_0802"/>
</dbReference>
<dbReference type="GeneID" id="1451684"/>
<dbReference type="KEGG" id="mja:MJ_0802"/>
<dbReference type="eggNOG" id="arCOG04904">
    <property type="taxonomic scope" value="Archaea"/>
</dbReference>
<dbReference type="HOGENOM" id="CLU_121275_0_0_2"/>
<dbReference type="InParanoid" id="Q58212"/>
<dbReference type="OrthoDB" id="52971at2157"/>
<dbReference type="PhylomeDB" id="Q58212"/>
<dbReference type="Proteomes" id="UP000000805">
    <property type="component" value="Chromosome"/>
</dbReference>
<dbReference type="InterPro" id="IPR016762">
    <property type="entry name" value="Methan_mark_17"/>
</dbReference>
<dbReference type="NCBIfam" id="TIGR03291">
    <property type="entry name" value="methan_mark_17"/>
    <property type="match status" value="1"/>
</dbReference>
<dbReference type="Pfam" id="PF09886">
    <property type="entry name" value="DUF2113"/>
    <property type="match status" value="1"/>
</dbReference>
<dbReference type="PIRSF" id="PIRSF019464">
    <property type="entry name" value="UCP019464"/>
    <property type="match status" value="1"/>
</dbReference>
<sequence>MAEIVVHCEDKAGKEIYTKVIQTALEDLLLGKSIIRVEFIAKEKEPYFILGVLPKHTRRAIKLRDFAEIVEQKKEGGKIIYKLKITDETYLPHLLKKIHVIDQPSRFEVVTDSDIDLDMEVYDAGKDFIDKVMDFMGRVFPEGMRIKNTYIDKAIVCIASERPLKDEEIEEALKLKDKLEKMNTAGYY</sequence>
<protein>
    <recommendedName>
        <fullName>Uncharacterized protein MJ0802</fullName>
    </recommendedName>
</protein>
<keyword id="KW-1185">Reference proteome</keyword>
<gene>
    <name type="ordered locus">MJ0802</name>
</gene>
<reference key="1">
    <citation type="journal article" date="1996" name="Science">
        <title>Complete genome sequence of the methanogenic archaeon, Methanococcus jannaschii.</title>
        <authorList>
            <person name="Bult C.J."/>
            <person name="White O."/>
            <person name="Olsen G.J."/>
            <person name="Zhou L."/>
            <person name="Fleischmann R.D."/>
            <person name="Sutton G.G."/>
            <person name="Blake J.A."/>
            <person name="FitzGerald L.M."/>
            <person name="Clayton R.A."/>
            <person name="Gocayne J.D."/>
            <person name="Kerlavage A.R."/>
            <person name="Dougherty B.A."/>
            <person name="Tomb J.-F."/>
            <person name="Adams M.D."/>
            <person name="Reich C.I."/>
            <person name="Overbeek R."/>
            <person name="Kirkness E.F."/>
            <person name="Weinstock K.G."/>
            <person name="Merrick J.M."/>
            <person name="Glodek A."/>
            <person name="Scott J.L."/>
            <person name="Geoghagen N.S.M."/>
            <person name="Weidman J.F."/>
            <person name="Fuhrmann J.L."/>
            <person name="Nguyen D."/>
            <person name="Utterback T.R."/>
            <person name="Kelley J.M."/>
            <person name="Peterson J.D."/>
            <person name="Sadow P.W."/>
            <person name="Hanna M.C."/>
            <person name="Cotton M.D."/>
            <person name="Roberts K.M."/>
            <person name="Hurst M.A."/>
            <person name="Kaine B.P."/>
            <person name="Borodovsky M."/>
            <person name="Klenk H.-P."/>
            <person name="Fraser C.M."/>
            <person name="Smith H.O."/>
            <person name="Woese C.R."/>
            <person name="Venter J.C."/>
        </authorList>
    </citation>
    <scope>NUCLEOTIDE SEQUENCE [LARGE SCALE GENOMIC DNA]</scope>
    <source>
        <strain>ATCC 43067 / DSM 2661 / JAL-1 / JCM 10045 / NBRC 100440</strain>
    </source>
</reference>
<organism>
    <name type="scientific">Methanocaldococcus jannaschii (strain ATCC 43067 / DSM 2661 / JAL-1 / JCM 10045 / NBRC 100440)</name>
    <name type="common">Methanococcus jannaschii</name>
    <dbReference type="NCBI Taxonomy" id="243232"/>
    <lineage>
        <taxon>Archaea</taxon>
        <taxon>Methanobacteriati</taxon>
        <taxon>Methanobacteriota</taxon>
        <taxon>Methanomada group</taxon>
        <taxon>Methanococci</taxon>
        <taxon>Methanococcales</taxon>
        <taxon>Methanocaldococcaceae</taxon>
        <taxon>Methanocaldococcus</taxon>
    </lineage>
</organism>
<name>Y802_METJA</name>